<protein>
    <recommendedName>
        <fullName evidence="1">Small ribosomal subunit protein uS14</fullName>
    </recommendedName>
    <alternativeName>
        <fullName evidence="2">30S ribosomal protein S14 type Z</fullName>
    </alternativeName>
</protein>
<name>RS14Z_BREBN</name>
<gene>
    <name evidence="1" type="primary">rpsZ</name>
    <name evidence="1" type="synonym">rpsN</name>
    <name type="ordered locus">BBR47_02340</name>
</gene>
<keyword id="KW-0479">Metal-binding</keyword>
<keyword id="KW-1185">Reference proteome</keyword>
<keyword id="KW-0687">Ribonucleoprotein</keyword>
<keyword id="KW-0689">Ribosomal protein</keyword>
<keyword id="KW-0694">RNA-binding</keyword>
<keyword id="KW-0699">rRNA-binding</keyword>
<keyword id="KW-0862">Zinc</keyword>
<proteinExistence type="inferred from homology"/>
<dbReference type="EMBL" id="AP008955">
    <property type="protein sequence ID" value="BAH41211.1"/>
    <property type="molecule type" value="Genomic_DNA"/>
</dbReference>
<dbReference type="RefSeq" id="WP_007716256.1">
    <property type="nucleotide sequence ID" value="NC_012491.1"/>
</dbReference>
<dbReference type="SMR" id="C0ZIJ3"/>
<dbReference type="STRING" id="358681.BBR47_02340"/>
<dbReference type="KEGG" id="bbe:BBR47_02340"/>
<dbReference type="eggNOG" id="COG0199">
    <property type="taxonomic scope" value="Bacteria"/>
</dbReference>
<dbReference type="HOGENOM" id="CLU_139869_3_0_9"/>
<dbReference type="Proteomes" id="UP000001877">
    <property type="component" value="Chromosome"/>
</dbReference>
<dbReference type="GO" id="GO:0015935">
    <property type="term" value="C:small ribosomal subunit"/>
    <property type="evidence" value="ECO:0007669"/>
    <property type="project" value="TreeGrafter"/>
</dbReference>
<dbReference type="GO" id="GO:0019843">
    <property type="term" value="F:rRNA binding"/>
    <property type="evidence" value="ECO:0007669"/>
    <property type="project" value="UniProtKB-UniRule"/>
</dbReference>
<dbReference type="GO" id="GO:0003735">
    <property type="term" value="F:structural constituent of ribosome"/>
    <property type="evidence" value="ECO:0007669"/>
    <property type="project" value="InterPro"/>
</dbReference>
<dbReference type="GO" id="GO:0008270">
    <property type="term" value="F:zinc ion binding"/>
    <property type="evidence" value="ECO:0007669"/>
    <property type="project" value="UniProtKB-UniRule"/>
</dbReference>
<dbReference type="GO" id="GO:0006412">
    <property type="term" value="P:translation"/>
    <property type="evidence" value="ECO:0007669"/>
    <property type="project" value="UniProtKB-UniRule"/>
</dbReference>
<dbReference type="FunFam" id="4.10.830.10:FF:000001">
    <property type="entry name" value="30S ribosomal protein S14 type Z"/>
    <property type="match status" value="1"/>
</dbReference>
<dbReference type="Gene3D" id="4.10.830.10">
    <property type="entry name" value="30s Ribosomal Protein S14, Chain N"/>
    <property type="match status" value="1"/>
</dbReference>
<dbReference type="HAMAP" id="MF_01364_B">
    <property type="entry name" value="Ribosomal_uS14_2_B"/>
    <property type="match status" value="1"/>
</dbReference>
<dbReference type="InterPro" id="IPR001209">
    <property type="entry name" value="Ribosomal_uS14"/>
</dbReference>
<dbReference type="InterPro" id="IPR023053">
    <property type="entry name" value="Ribosomal_uS14_bact"/>
</dbReference>
<dbReference type="InterPro" id="IPR018271">
    <property type="entry name" value="Ribosomal_uS14_CS"/>
</dbReference>
<dbReference type="InterPro" id="IPR043140">
    <property type="entry name" value="Ribosomal_uS14_sf"/>
</dbReference>
<dbReference type="NCBIfam" id="NF005974">
    <property type="entry name" value="PRK08061.1"/>
    <property type="match status" value="1"/>
</dbReference>
<dbReference type="PANTHER" id="PTHR19836">
    <property type="entry name" value="30S RIBOSOMAL PROTEIN S14"/>
    <property type="match status" value="1"/>
</dbReference>
<dbReference type="PANTHER" id="PTHR19836:SF26">
    <property type="entry name" value="SMALL RIBOSOMAL SUBUNIT PROTEIN US14B"/>
    <property type="match status" value="1"/>
</dbReference>
<dbReference type="Pfam" id="PF00253">
    <property type="entry name" value="Ribosomal_S14"/>
    <property type="match status" value="1"/>
</dbReference>
<dbReference type="SUPFAM" id="SSF57716">
    <property type="entry name" value="Glucocorticoid receptor-like (DNA-binding domain)"/>
    <property type="match status" value="1"/>
</dbReference>
<dbReference type="PROSITE" id="PS00527">
    <property type="entry name" value="RIBOSOMAL_S14"/>
    <property type="match status" value="1"/>
</dbReference>
<comment type="function">
    <text evidence="1">Binds 16S rRNA, required for the assembly of 30S particles and may also be responsible for determining the conformation of the 16S rRNA at the A site.</text>
</comment>
<comment type="cofactor">
    <cofactor evidence="1">
        <name>Zn(2+)</name>
        <dbReference type="ChEBI" id="CHEBI:29105"/>
    </cofactor>
    <text evidence="1">Binds 1 zinc ion per subunit.</text>
</comment>
<comment type="subunit">
    <text evidence="1">Part of the 30S ribosomal subunit. Contacts proteins S3 and S10.</text>
</comment>
<comment type="similarity">
    <text evidence="1">Belongs to the universal ribosomal protein uS14 family. Zinc-binding uS14 subfamily.</text>
</comment>
<accession>C0ZIJ3</accession>
<evidence type="ECO:0000255" key="1">
    <source>
        <dbReference type="HAMAP-Rule" id="MF_01364"/>
    </source>
</evidence>
<evidence type="ECO:0000305" key="2"/>
<organism>
    <name type="scientific">Brevibacillus brevis (strain 47 / JCM 6285 / NBRC 100599)</name>
    <dbReference type="NCBI Taxonomy" id="358681"/>
    <lineage>
        <taxon>Bacteria</taxon>
        <taxon>Bacillati</taxon>
        <taxon>Bacillota</taxon>
        <taxon>Bacilli</taxon>
        <taxon>Bacillales</taxon>
        <taxon>Paenibacillaceae</taxon>
        <taxon>Brevibacillus</taxon>
    </lineage>
</organism>
<reference key="1">
    <citation type="submission" date="2005-03" db="EMBL/GenBank/DDBJ databases">
        <title>Brevibacillus brevis strain 47, complete genome.</title>
        <authorList>
            <person name="Hosoyama A."/>
            <person name="Yamada R."/>
            <person name="Hongo Y."/>
            <person name="Terui Y."/>
            <person name="Ankai A."/>
            <person name="Masuyama W."/>
            <person name="Sekiguchi M."/>
            <person name="Takeda T."/>
            <person name="Asano K."/>
            <person name="Ohji S."/>
            <person name="Ichikawa N."/>
            <person name="Narita S."/>
            <person name="Aoki N."/>
            <person name="Miura H."/>
            <person name="Matsushita S."/>
            <person name="Sekigawa T."/>
            <person name="Yamagata H."/>
            <person name="Yoshikawa H."/>
            <person name="Udaka S."/>
            <person name="Tanikawa S."/>
            <person name="Fujita N."/>
        </authorList>
    </citation>
    <scope>NUCLEOTIDE SEQUENCE [LARGE SCALE GENOMIC DNA]</scope>
    <source>
        <strain>47 / JCM 6285 / NBRC 100599</strain>
    </source>
</reference>
<feature type="chain" id="PRO_1000166761" description="Small ribosomal subunit protein uS14">
    <location>
        <begin position="1"/>
        <end position="61"/>
    </location>
</feature>
<feature type="binding site" evidence="1">
    <location>
        <position position="24"/>
    </location>
    <ligand>
        <name>Zn(2+)</name>
        <dbReference type="ChEBI" id="CHEBI:29105"/>
    </ligand>
</feature>
<feature type="binding site" evidence="1">
    <location>
        <position position="27"/>
    </location>
    <ligand>
        <name>Zn(2+)</name>
        <dbReference type="ChEBI" id="CHEBI:29105"/>
    </ligand>
</feature>
<feature type="binding site" evidence="1">
    <location>
        <position position="40"/>
    </location>
    <ligand>
        <name>Zn(2+)</name>
        <dbReference type="ChEBI" id="CHEBI:29105"/>
    </ligand>
</feature>
<feature type="binding site" evidence="1">
    <location>
        <position position="43"/>
    </location>
    <ligand>
        <name>Zn(2+)</name>
        <dbReference type="ChEBI" id="CHEBI:29105"/>
    </ligand>
</feature>
<sequence>MAKKSMIIKQQREPKFAVRAYTRCERCGRPHSVLRKFKLCRICFRELAYKGQIPGVKKASW</sequence>